<proteinExistence type="inferred from homology"/>
<reference key="1">
    <citation type="journal article" date="2008" name="Genome Res.">
        <title>Chlamydia trachomatis: genome sequence analysis of lymphogranuloma venereum isolates.</title>
        <authorList>
            <person name="Thomson N.R."/>
            <person name="Holden M.T.G."/>
            <person name="Carder C."/>
            <person name="Lennard N."/>
            <person name="Lockey S.J."/>
            <person name="Marsh P."/>
            <person name="Skipp P."/>
            <person name="O'Connor C.D."/>
            <person name="Goodhead I."/>
            <person name="Norbertzcak H."/>
            <person name="Harris B."/>
            <person name="Ormond D."/>
            <person name="Rance R."/>
            <person name="Quail M.A."/>
            <person name="Parkhill J."/>
            <person name="Stephens R.S."/>
            <person name="Clarke I.N."/>
        </authorList>
    </citation>
    <scope>NUCLEOTIDE SEQUENCE [LARGE SCALE GENOMIC DNA]</scope>
    <source>
        <strain>UCH-1/proctitis</strain>
    </source>
</reference>
<comment type="function">
    <text evidence="1">Catalyzes the reversible interconversion of serine and glycine with tetrahydrofolate (THF) serving as the one-carbon carrier. This reaction serves as the major source of one-carbon groups required for the biosynthesis of purines, thymidylate, methionine, and other important biomolecules. Also exhibits THF-independent aldolase activity toward beta-hydroxyamino acids, producing glycine and aldehydes, via a retro-aldol mechanism.</text>
</comment>
<comment type="catalytic activity">
    <reaction evidence="1">
        <text>(6R)-5,10-methylene-5,6,7,8-tetrahydrofolate + glycine + H2O = (6S)-5,6,7,8-tetrahydrofolate + L-serine</text>
        <dbReference type="Rhea" id="RHEA:15481"/>
        <dbReference type="ChEBI" id="CHEBI:15377"/>
        <dbReference type="ChEBI" id="CHEBI:15636"/>
        <dbReference type="ChEBI" id="CHEBI:33384"/>
        <dbReference type="ChEBI" id="CHEBI:57305"/>
        <dbReference type="ChEBI" id="CHEBI:57453"/>
        <dbReference type="EC" id="2.1.2.1"/>
    </reaction>
</comment>
<comment type="cofactor">
    <cofactor evidence="1">
        <name>pyridoxal 5'-phosphate</name>
        <dbReference type="ChEBI" id="CHEBI:597326"/>
    </cofactor>
</comment>
<comment type="pathway">
    <text evidence="1">One-carbon metabolism; tetrahydrofolate interconversion.</text>
</comment>
<comment type="pathway">
    <text evidence="1">Amino-acid biosynthesis; glycine biosynthesis; glycine from L-serine: step 1/1.</text>
</comment>
<comment type="subunit">
    <text evidence="1">Homodimer.</text>
</comment>
<comment type="subcellular location">
    <subcellularLocation>
        <location evidence="1">Cytoplasm</location>
    </subcellularLocation>
</comment>
<comment type="similarity">
    <text evidence="1">Belongs to the SHMT family.</text>
</comment>
<organism>
    <name type="scientific">Chlamydia trachomatis serovar L2b (strain UCH-1/proctitis)</name>
    <dbReference type="NCBI Taxonomy" id="471473"/>
    <lineage>
        <taxon>Bacteria</taxon>
        <taxon>Pseudomonadati</taxon>
        <taxon>Chlamydiota</taxon>
        <taxon>Chlamydiia</taxon>
        <taxon>Chlamydiales</taxon>
        <taxon>Chlamydiaceae</taxon>
        <taxon>Chlamydia/Chlamydophila group</taxon>
        <taxon>Chlamydia</taxon>
    </lineage>
</organism>
<accession>B0BC69</accession>
<sequence length="497" mass="54249">MASLLDRYLRNISDKSQQNLASVAYLASLDHLLHAFPSIGQSIVQELKSQRSRLKMIASENFSSLSVQLAMGNLLTDKYCEGSPFKRFYSCCENVDAIEWECAETAKELFGAESAFVQPHSGADANLLAIMSIITQKIQSPAVQQLGYKTINDLPEQEYEALKAEMAQHKCLGPSLNSGGHLTHGTVRMNIMSKLMHCLPYEVNLDTELFDYDEIAKIAKEHKPTVLIAGYSSYSRRFNFATLKQIAEDCGAVLWVDMAHFAGLVAGGVFVGEENPMPYADIVTTTTHKTLRGPRGGLVLAKKEYANTLNKACPLMMGGPLPHVIAAKAIALKEAMTINFRKYAHKVVENAQTLAEVFQRNGLRLLTGGTDNHMLIIDLTSLGVPGRIAEDMLTSVGIAVNRNTIPSDASGQWKTSGIRLGTPALTTLGMGSAEMEEVANIIVKVLRNITVRSNAESGSSKSEGELSEGIAQEARQRVADLLGRFPLYPEIDLETLV</sequence>
<evidence type="ECO:0000255" key="1">
    <source>
        <dbReference type="HAMAP-Rule" id="MF_00051"/>
    </source>
</evidence>
<name>GLYA_CHLTB</name>
<keyword id="KW-0028">Amino-acid biosynthesis</keyword>
<keyword id="KW-0963">Cytoplasm</keyword>
<keyword id="KW-0554">One-carbon metabolism</keyword>
<keyword id="KW-0663">Pyridoxal phosphate</keyword>
<keyword id="KW-0808">Transferase</keyword>
<gene>
    <name evidence="1" type="primary">glyA</name>
    <name type="ordered locus">CTLon_0687</name>
</gene>
<protein>
    <recommendedName>
        <fullName evidence="1">Serine hydroxymethyltransferase</fullName>
        <shortName evidence="1">SHMT</shortName>
        <shortName evidence="1">Serine methylase</shortName>
        <ecNumber evidence="1">2.1.2.1</ecNumber>
    </recommendedName>
</protein>
<feature type="chain" id="PRO_1000091528" description="Serine hydroxymethyltransferase">
    <location>
        <begin position="1"/>
        <end position="497"/>
    </location>
</feature>
<feature type="binding site" evidence="1">
    <location>
        <position position="176"/>
    </location>
    <ligand>
        <name>(6S)-5,6,7,8-tetrahydrofolate</name>
        <dbReference type="ChEBI" id="CHEBI:57453"/>
    </ligand>
</feature>
<feature type="binding site" evidence="1">
    <location>
        <begin position="180"/>
        <end position="182"/>
    </location>
    <ligand>
        <name>(6S)-5,6,7,8-tetrahydrofolate</name>
        <dbReference type="ChEBI" id="CHEBI:57453"/>
    </ligand>
</feature>
<feature type="site" description="Plays an important role in substrate specificity" evidence="1">
    <location>
        <position position="288"/>
    </location>
</feature>
<feature type="modified residue" description="N6-(pyridoxal phosphate)lysine" evidence="1">
    <location>
        <position position="289"/>
    </location>
</feature>
<dbReference type="EC" id="2.1.2.1" evidence="1"/>
<dbReference type="EMBL" id="AM884177">
    <property type="protein sequence ID" value="CAP07084.1"/>
    <property type="molecule type" value="Genomic_DNA"/>
</dbReference>
<dbReference type="RefSeq" id="WP_009873807.1">
    <property type="nucleotide sequence ID" value="NC_010280.2"/>
</dbReference>
<dbReference type="SMR" id="B0BC69"/>
<dbReference type="KEGG" id="ctl:CTLon_0687"/>
<dbReference type="HOGENOM" id="CLU_022477_2_1_0"/>
<dbReference type="UniPathway" id="UPA00193"/>
<dbReference type="UniPathway" id="UPA00288">
    <property type="reaction ID" value="UER01023"/>
</dbReference>
<dbReference type="Proteomes" id="UP001154401">
    <property type="component" value="Chromosome"/>
</dbReference>
<dbReference type="GO" id="GO:0005829">
    <property type="term" value="C:cytosol"/>
    <property type="evidence" value="ECO:0007669"/>
    <property type="project" value="TreeGrafter"/>
</dbReference>
<dbReference type="GO" id="GO:0004372">
    <property type="term" value="F:glycine hydroxymethyltransferase activity"/>
    <property type="evidence" value="ECO:0007669"/>
    <property type="project" value="UniProtKB-UniRule"/>
</dbReference>
<dbReference type="GO" id="GO:0030170">
    <property type="term" value="F:pyridoxal phosphate binding"/>
    <property type="evidence" value="ECO:0007669"/>
    <property type="project" value="UniProtKB-UniRule"/>
</dbReference>
<dbReference type="GO" id="GO:0019264">
    <property type="term" value="P:glycine biosynthetic process from serine"/>
    <property type="evidence" value="ECO:0007669"/>
    <property type="project" value="UniProtKB-UniRule"/>
</dbReference>
<dbReference type="GO" id="GO:0035999">
    <property type="term" value="P:tetrahydrofolate interconversion"/>
    <property type="evidence" value="ECO:0007669"/>
    <property type="project" value="UniProtKB-UniRule"/>
</dbReference>
<dbReference type="CDD" id="cd00378">
    <property type="entry name" value="SHMT"/>
    <property type="match status" value="1"/>
</dbReference>
<dbReference type="FunFam" id="3.40.640.10:FF:000060">
    <property type="entry name" value="Serine hydroxymethyltransferase"/>
    <property type="match status" value="1"/>
</dbReference>
<dbReference type="Gene3D" id="3.90.1150.10">
    <property type="entry name" value="Aspartate Aminotransferase, domain 1"/>
    <property type="match status" value="1"/>
</dbReference>
<dbReference type="Gene3D" id="3.40.640.10">
    <property type="entry name" value="Type I PLP-dependent aspartate aminotransferase-like (Major domain)"/>
    <property type="match status" value="1"/>
</dbReference>
<dbReference type="HAMAP" id="MF_00051">
    <property type="entry name" value="SHMT"/>
    <property type="match status" value="1"/>
</dbReference>
<dbReference type="InterPro" id="IPR015424">
    <property type="entry name" value="PyrdxlP-dep_Trfase"/>
</dbReference>
<dbReference type="InterPro" id="IPR015421">
    <property type="entry name" value="PyrdxlP-dep_Trfase_major"/>
</dbReference>
<dbReference type="InterPro" id="IPR015422">
    <property type="entry name" value="PyrdxlP-dep_Trfase_small"/>
</dbReference>
<dbReference type="InterPro" id="IPR001085">
    <property type="entry name" value="Ser_HO-MeTrfase"/>
</dbReference>
<dbReference type="InterPro" id="IPR049943">
    <property type="entry name" value="Ser_HO-MeTrfase-like"/>
</dbReference>
<dbReference type="InterPro" id="IPR019798">
    <property type="entry name" value="Ser_HO-MeTrfase_PLP_BS"/>
</dbReference>
<dbReference type="InterPro" id="IPR039429">
    <property type="entry name" value="SHMT-like_dom"/>
</dbReference>
<dbReference type="NCBIfam" id="NF000586">
    <property type="entry name" value="PRK00011.1"/>
    <property type="match status" value="1"/>
</dbReference>
<dbReference type="NCBIfam" id="NF010094">
    <property type="entry name" value="PRK13580.1"/>
    <property type="match status" value="1"/>
</dbReference>
<dbReference type="PANTHER" id="PTHR11680">
    <property type="entry name" value="SERINE HYDROXYMETHYLTRANSFERASE"/>
    <property type="match status" value="1"/>
</dbReference>
<dbReference type="PANTHER" id="PTHR11680:SF35">
    <property type="entry name" value="SERINE HYDROXYMETHYLTRANSFERASE 1"/>
    <property type="match status" value="1"/>
</dbReference>
<dbReference type="Pfam" id="PF00464">
    <property type="entry name" value="SHMT"/>
    <property type="match status" value="2"/>
</dbReference>
<dbReference type="PIRSF" id="PIRSF000412">
    <property type="entry name" value="SHMT"/>
    <property type="match status" value="1"/>
</dbReference>
<dbReference type="SUPFAM" id="SSF53383">
    <property type="entry name" value="PLP-dependent transferases"/>
    <property type="match status" value="1"/>
</dbReference>
<dbReference type="PROSITE" id="PS00096">
    <property type="entry name" value="SHMT"/>
    <property type="match status" value="1"/>
</dbReference>